<reference key="1">
    <citation type="journal article" date="2003" name="Nature">
        <title>Genome sequence of Bacillus cereus and comparative analysis with Bacillus anthracis.</title>
        <authorList>
            <person name="Ivanova N."/>
            <person name="Sorokin A."/>
            <person name="Anderson I."/>
            <person name="Galleron N."/>
            <person name="Candelon B."/>
            <person name="Kapatral V."/>
            <person name="Bhattacharyya A."/>
            <person name="Reznik G."/>
            <person name="Mikhailova N."/>
            <person name="Lapidus A."/>
            <person name="Chu L."/>
            <person name="Mazur M."/>
            <person name="Goltsman E."/>
            <person name="Larsen N."/>
            <person name="D'Souza M."/>
            <person name="Walunas T."/>
            <person name="Grechkin Y."/>
            <person name="Pusch G."/>
            <person name="Haselkorn R."/>
            <person name="Fonstein M."/>
            <person name="Ehrlich S.D."/>
            <person name="Overbeek R."/>
            <person name="Kyrpides N.C."/>
        </authorList>
    </citation>
    <scope>NUCLEOTIDE SEQUENCE [LARGE SCALE GENOMIC DNA]</scope>
    <source>
        <strain>ATCC 14579 / DSM 31 / CCUG 7414 / JCM 2152 / NBRC 15305 / NCIMB 9373 / NCTC 2599 / NRRL B-3711</strain>
    </source>
</reference>
<organism>
    <name type="scientific">Bacillus cereus (strain ATCC 14579 / DSM 31 / CCUG 7414 / JCM 2152 / NBRC 15305 / NCIMB 9373 / NCTC 2599 / NRRL B-3711)</name>
    <dbReference type="NCBI Taxonomy" id="226900"/>
    <lineage>
        <taxon>Bacteria</taxon>
        <taxon>Bacillati</taxon>
        <taxon>Bacillota</taxon>
        <taxon>Bacilli</taxon>
        <taxon>Bacillales</taxon>
        <taxon>Bacillaceae</taxon>
        <taxon>Bacillus</taxon>
        <taxon>Bacillus cereus group</taxon>
    </lineage>
</organism>
<sequence length="259" mass="28416">MMQKQNMIVVNQKEIAKNIYELVLQGTLVQQMNEPGQFVHIKVAEGIAPLLRRPISICNVDQEKNEFTMLYRAEGQGTKTLATRKQGEMVDVLGPLGHGFPVEEAEAGQTALLVGGGIGVPPLYELSQRLVAKGVRVIHILGFQTKDVVFYEEKFAELGDTYVATVDGTHGTKGFVTDVIDNYGIDFDILYSCGPLAMLRALEGRYKEKKAYISLEERMGCGIGACFACVCHLQEDPSGHSYKKVCSDGPVFPIGEVVL</sequence>
<feature type="chain" id="PRO_0000148354" description="Dihydroorotate dehydrogenase B (NAD(+)), electron transfer subunit">
    <location>
        <begin position="1"/>
        <end position="259"/>
    </location>
</feature>
<feature type="domain" description="FAD-binding FR-type" evidence="1">
    <location>
        <begin position="2"/>
        <end position="102"/>
    </location>
</feature>
<feature type="binding site" evidence="1">
    <location>
        <begin position="53"/>
        <end position="56"/>
    </location>
    <ligand>
        <name>FAD</name>
        <dbReference type="ChEBI" id="CHEBI:57692"/>
    </ligand>
</feature>
<feature type="binding site" evidence="1">
    <location>
        <begin position="70"/>
        <end position="72"/>
    </location>
    <ligand>
        <name>FAD</name>
        <dbReference type="ChEBI" id="CHEBI:57692"/>
    </ligand>
</feature>
<feature type="binding site" evidence="1">
    <location>
        <begin position="77"/>
        <end position="78"/>
    </location>
    <ligand>
        <name>FAD</name>
        <dbReference type="ChEBI" id="CHEBI:57692"/>
    </ligand>
</feature>
<feature type="binding site" evidence="1">
    <location>
        <position position="221"/>
    </location>
    <ligand>
        <name>[2Fe-2S] cluster</name>
        <dbReference type="ChEBI" id="CHEBI:190135"/>
    </ligand>
</feature>
<feature type="binding site" evidence="1">
    <location>
        <position position="226"/>
    </location>
    <ligand>
        <name>[2Fe-2S] cluster</name>
        <dbReference type="ChEBI" id="CHEBI:190135"/>
    </ligand>
</feature>
<feature type="binding site" evidence="1">
    <location>
        <position position="229"/>
    </location>
    <ligand>
        <name>[2Fe-2S] cluster</name>
        <dbReference type="ChEBI" id="CHEBI:190135"/>
    </ligand>
</feature>
<feature type="binding site" evidence="1">
    <location>
        <position position="246"/>
    </location>
    <ligand>
        <name>[2Fe-2S] cluster</name>
        <dbReference type="ChEBI" id="CHEBI:190135"/>
    </ligand>
</feature>
<accession>Q819S4</accession>
<keyword id="KW-0001">2Fe-2S</keyword>
<keyword id="KW-0249">Electron transport</keyword>
<keyword id="KW-0274">FAD</keyword>
<keyword id="KW-0285">Flavoprotein</keyword>
<keyword id="KW-0408">Iron</keyword>
<keyword id="KW-0411">Iron-sulfur</keyword>
<keyword id="KW-0479">Metal-binding</keyword>
<keyword id="KW-0665">Pyrimidine biosynthesis</keyword>
<keyword id="KW-1185">Reference proteome</keyword>
<keyword id="KW-0813">Transport</keyword>
<comment type="function">
    <text evidence="1">Responsible for channeling the electrons from the oxidation of dihydroorotate from the FMN redox center in the PyrD type B subunit to the ultimate electron acceptor NAD(+).</text>
</comment>
<comment type="cofactor">
    <cofactor evidence="1">
        <name>[2Fe-2S] cluster</name>
        <dbReference type="ChEBI" id="CHEBI:190135"/>
    </cofactor>
    <text evidence="1">Binds 1 [2Fe-2S] cluster per subunit.</text>
</comment>
<comment type="cofactor">
    <cofactor evidence="1">
        <name>FAD</name>
        <dbReference type="ChEBI" id="CHEBI:57692"/>
    </cofactor>
    <text evidence="1">Binds 1 FAD per subunit.</text>
</comment>
<comment type="pathway">
    <text evidence="1">Pyrimidine metabolism; UMP biosynthesis via de novo pathway; orotate from (S)-dihydroorotate (NAD(+) route): step 1/1.</text>
</comment>
<comment type="subunit">
    <text evidence="1">Heterotetramer of 2 PyrK and 2 PyrD type B subunits.</text>
</comment>
<comment type="similarity">
    <text evidence="1">Belongs to the PyrK family.</text>
</comment>
<proteinExistence type="inferred from homology"/>
<evidence type="ECO:0000255" key="1">
    <source>
        <dbReference type="HAMAP-Rule" id="MF_01211"/>
    </source>
</evidence>
<protein>
    <recommendedName>
        <fullName evidence="1">Dihydroorotate dehydrogenase B (NAD(+)), electron transfer subunit</fullName>
    </recommendedName>
    <alternativeName>
        <fullName evidence="1">Dihydroorotate oxidase B, electron transfer subunit</fullName>
    </alternativeName>
</protein>
<gene>
    <name evidence="1" type="primary">pyrK</name>
    <name type="ordered locus">BC_3885</name>
</gene>
<dbReference type="EMBL" id="AE016877">
    <property type="protein sequence ID" value="AAP10806.1"/>
    <property type="molecule type" value="Genomic_DNA"/>
</dbReference>
<dbReference type="RefSeq" id="NP_833605.1">
    <property type="nucleotide sequence ID" value="NC_004722.1"/>
</dbReference>
<dbReference type="RefSeq" id="WP_000983359.1">
    <property type="nucleotide sequence ID" value="NZ_CP138336.1"/>
</dbReference>
<dbReference type="SMR" id="Q819S4"/>
<dbReference type="STRING" id="226900.BC_3885"/>
<dbReference type="GeneID" id="72450567"/>
<dbReference type="KEGG" id="bce:BC3885"/>
<dbReference type="PATRIC" id="fig|226900.8.peg.4007"/>
<dbReference type="HOGENOM" id="CLU_003827_1_2_9"/>
<dbReference type="OrthoDB" id="9778346at2"/>
<dbReference type="UniPathway" id="UPA00070">
    <property type="reaction ID" value="UER00945"/>
</dbReference>
<dbReference type="Proteomes" id="UP000001417">
    <property type="component" value="Chromosome"/>
</dbReference>
<dbReference type="GO" id="GO:0051537">
    <property type="term" value="F:2 iron, 2 sulfur cluster binding"/>
    <property type="evidence" value="ECO:0007669"/>
    <property type="project" value="UniProtKB-KW"/>
</dbReference>
<dbReference type="GO" id="GO:0009055">
    <property type="term" value="F:electron transfer activity"/>
    <property type="evidence" value="ECO:0007669"/>
    <property type="project" value="UniProtKB-UniRule"/>
</dbReference>
<dbReference type="GO" id="GO:0050660">
    <property type="term" value="F:flavin adenine dinucleotide binding"/>
    <property type="evidence" value="ECO:0007669"/>
    <property type="project" value="InterPro"/>
</dbReference>
<dbReference type="GO" id="GO:0046872">
    <property type="term" value="F:metal ion binding"/>
    <property type="evidence" value="ECO:0007669"/>
    <property type="project" value="UniProtKB-KW"/>
</dbReference>
<dbReference type="GO" id="GO:0016491">
    <property type="term" value="F:oxidoreductase activity"/>
    <property type="evidence" value="ECO:0007669"/>
    <property type="project" value="InterPro"/>
</dbReference>
<dbReference type="GO" id="GO:0044205">
    <property type="term" value="P:'de novo' UMP biosynthetic process"/>
    <property type="evidence" value="ECO:0007669"/>
    <property type="project" value="UniProtKB-UniRule"/>
</dbReference>
<dbReference type="CDD" id="cd06218">
    <property type="entry name" value="DHOD_e_trans"/>
    <property type="match status" value="1"/>
</dbReference>
<dbReference type="FunFam" id="2.10.240.10:FF:000001">
    <property type="entry name" value="Dihydroorotate dehydrogenase B (NAD(+)), electron transfer subunit"/>
    <property type="match status" value="1"/>
</dbReference>
<dbReference type="FunFam" id="2.40.30.10:FF:000045">
    <property type="entry name" value="Dihydroorotate dehydrogenase B (NAD(+)), electron transfer subunit"/>
    <property type="match status" value="1"/>
</dbReference>
<dbReference type="FunFam" id="3.40.50.80:FF:000017">
    <property type="entry name" value="Dihydroorotate dehydrogenase B (NAD(+)), electron transfer subunit"/>
    <property type="match status" value="1"/>
</dbReference>
<dbReference type="Gene3D" id="2.10.240.10">
    <property type="entry name" value="Dihydroorotate dehydrogenase, electron transfer subunit"/>
    <property type="match status" value="1"/>
</dbReference>
<dbReference type="Gene3D" id="3.40.50.80">
    <property type="entry name" value="Nucleotide-binding domain of ferredoxin-NADP reductase (FNR) module"/>
    <property type="match status" value="1"/>
</dbReference>
<dbReference type="Gene3D" id="2.40.30.10">
    <property type="entry name" value="Translation factors"/>
    <property type="match status" value="1"/>
</dbReference>
<dbReference type="HAMAP" id="MF_01211">
    <property type="entry name" value="DHODB_Fe_S_bind"/>
    <property type="match status" value="1"/>
</dbReference>
<dbReference type="InterPro" id="IPR012165">
    <property type="entry name" value="Cyt_c3_hydrogenase_gsu"/>
</dbReference>
<dbReference type="InterPro" id="IPR037117">
    <property type="entry name" value="Dihydroorotate_DH_ele_sf"/>
</dbReference>
<dbReference type="InterPro" id="IPR019480">
    <property type="entry name" value="Dihydroorotate_DH_Fe-S-bd"/>
</dbReference>
<dbReference type="InterPro" id="IPR023455">
    <property type="entry name" value="Dihydroorotate_DHASE_ETsu"/>
</dbReference>
<dbReference type="InterPro" id="IPR017927">
    <property type="entry name" value="FAD-bd_FR_type"/>
</dbReference>
<dbReference type="InterPro" id="IPR039261">
    <property type="entry name" value="FNR_nucleotide-bd"/>
</dbReference>
<dbReference type="InterPro" id="IPR001433">
    <property type="entry name" value="OxRdtase_FAD/NAD-bd"/>
</dbReference>
<dbReference type="InterPro" id="IPR050353">
    <property type="entry name" value="PyrK_electron_transfer"/>
</dbReference>
<dbReference type="InterPro" id="IPR017938">
    <property type="entry name" value="Riboflavin_synthase-like_b-brl"/>
</dbReference>
<dbReference type="NCBIfam" id="NF000797">
    <property type="entry name" value="PRK00054.1-2"/>
    <property type="match status" value="1"/>
</dbReference>
<dbReference type="NCBIfam" id="NF000799">
    <property type="entry name" value="PRK00054.1-4"/>
    <property type="match status" value="1"/>
</dbReference>
<dbReference type="PANTHER" id="PTHR43513">
    <property type="entry name" value="DIHYDROOROTATE DEHYDROGENASE B (NAD(+)), ELECTRON TRANSFER SUBUNIT"/>
    <property type="match status" value="1"/>
</dbReference>
<dbReference type="PANTHER" id="PTHR43513:SF3">
    <property type="entry name" value="DIHYDROOROTATE DEHYDROGENASE B (NAD(+)), ELECTRON TRANSFER SUBUNIT-RELATED"/>
    <property type="match status" value="1"/>
</dbReference>
<dbReference type="Pfam" id="PF10418">
    <property type="entry name" value="DHODB_Fe-S_bind"/>
    <property type="match status" value="1"/>
</dbReference>
<dbReference type="Pfam" id="PF00175">
    <property type="entry name" value="NAD_binding_1"/>
    <property type="match status" value="1"/>
</dbReference>
<dbReference type="PIRSF" id="PIRSF006816">
    <property type="entry name" value="Cyc3_hyd_g"/>
    <property type="match status" value="1"/>
</dbReference>
<dbReference type="PRINTS" id="PR00409">
    <property type="entry name" value="PHDIOXRDTASE"/>
</dbReference>
<dbReference type="SUPFAM" id="SSF52343">
    <property type="entry name" value="Ferredoxin reductase-like, C-terminal NADP-linked domain"/>
    <property type="match status" value="1"/>
</dbReference>
<dbReference type="SUPFAM" id="SSF63380">
    <property type="entry name" value="Riboflavin synthase domain-like"/>
    <property type="match status" value="1"/>
</dbReference>
<dbReference type="PROSITE" id="PS51384">
    <property type="entry name" value="FAD_FR"/>
    <property type="match status" value="1"/>
</dbReference>
<name>PYRK_BACCR</name>